<feature type="chain" id="PRO_1000086932" description="NAD(P)H-quinone oxidoreductase subunit 1">
    <location>
        <begin position="1"/>
        <end position="372"/>
    </location>
</feature>
<feature type="transmembrane region" description="Helical" evidence="1">
    <location>
        <begin position="27"/>
        <end position="47"/>
    </location>
</feature>
<feature type="transmembrane region" description="Helical" evidence="1">
    <location>
        <begin position="65"/>
        <end position="85"/>
    </location>
</feature>
<feature type="transmembrane region" description="Helical" evidence="1">
    <location>
        <begin position="97"/>
        <end position="117"/>
    </location>
</feature>
<feature type="transmembrane region" description="Helical" evidence="1">
    <location>
        <begin position="128"/>
        <end position="148"/>
    </location>
</feature>
<feature type="transmembrane region" description="Helical" evidence="1">
    <location>
        <begin position="176"/>
        <end position="196"/>
    </location>
</feature>
<feature type="transmembrane region" description="Helical" evidence="1">
    <location>
        <begin position="204"/>
        <end position="224"/>
    </location>
</feature>
<feature type="transmembrane region" description="Helical" evidence="1">
    <location>
        <begin position="249"/>
        <end position="269"/>
    </location>
</feature>
<feature type="transmembrane region" description="Helical" evidence="1">
    <location>
        <begin position="308"/>
        <end position="328"/>
    </location>
</feature>
<feature type="transmembrane region" description="Helical" evidence="1">
    <location>
        <begin position="351"/>
        <end position="371"/>
    </location>
</feature>
<organism>
    <name type="scientific">Acaryochloris marina (strain MBIC 11017)</name>
    <dbReference type="NCBI Taxonomy" id="329726"/>
    <lineage>
        <taxon>Bacteria</taxon>
        <taxon>Bacillati</taxon>
        <taxon>Cyanobacteriota</taxon>
        <taxon>Cyanophyceae</taxon>
        <taxon>Acaryochloridales</taxon>
        <taxon>Acaryochloridaceae</taxon>
        <taxon>Acaryochloris</taxon>
    </lineage>
</organism>
<evidence type="ECO:0000255" key="1">
    <source>
        <dbReference type="HAMAP-Rule" id="MF_01350"/>
    </source>
</evidence>
<name>NU1C_ACAM1</name>
<accession>B0BZW2</accession>
<proteinExistence type="inferred from homology"/>
<comment type="function">
    <text evidence="1">NDH-1 shuttles electrons from an unknown electron donor, via FMN and iron-sulfur (Fe-S) centers, to quinones in the respiratory and/or the photosynthetic chain. The immediate electron acceptor for the enzyme in this species is believed to be plastoquinone. Couples the redox reaction to proton translocation, and thus conserves the redox energy in a proton gradient.</text>
</comment>
<comment type="catalytic activity">
    <reaction evidence="1">
        <text>a plastoquinone + NADH + (n+1) H(+)(in) = a plastoquinol + NAD(+) + n H(+)(out)</text>
        <dbReference type="Rhea" id="RHEA:42608"/>
        <dbReference type="Rhea" id="RHEA-COMP:9561"/>
        <dbReference type="Rhea" id="RHEA-COMP:9562"/>
        <dbReference type="ChEBI" id="CHEBI:15378"/>
        <dbReference type="ChEBI" id="CHEBI:17757"/>
        <dbReference type="ChEBI" id="CHEBI:57540"/>
        <dbReference type="ChEBI" id="CHEBI:57945"/>
        <dbReference type="ChEBI" id="CHEBI:62192"/>
    </reaction>
</comment>
<comment type="catalytic activity">
    <reaction evidence="1">
        <text>a plastoquinone + NADPH + (n+1) H(+)(in) = a plastoquinol + NADP(+) + n H(+)(out)</text>
        <dbReference type="Rhea" id="RHEA:42612"/>
        <dbReference type="Rhea" id="RHEA-COMP:9561"/>
        <dbReference type="Rhea" id="RHEA-COMP:9562"/>
        <dbReference type="ChEBI" id="CHEBI:15378"/>
        <dbReference type="ChEBI" id="CHEBI:17757"/>
        <dbReference type="ChEBI" id="CHEBI:57783"/>
        <dbReference type="ChEBI" id="CHEBI:58349"/>
        <dbReference type="ChEBI" id="CHEBI:62192"/>
    </reaction>
</comment>
<comment type="subunit">
    <text evidence="1">NDH-1 is composed of at least 11 different subunits.</text>
</comment>
<comment type="subcellular location">
    <subcellularLocation>
        <location evidence="1">Cellular thylakoid membrane</location>
        <topology evidence="1">Multi-pass membrane protein</topology>
    </subcellularLocation>
</comment>
<comment type="similarity">
    <text evidence="1">Belongs to the complex I subunit 1 family.</text>
</comment>
<sequence length="372" mass="40677">MNPGIDLEQRFVETLMELGLTPGVAKTIWLPIPMLLMIIGATVGVLVSVWLERKISAAAQQRIGPEYIGPLGILAPVADGIKLVFKEDIVPANTDPWLFTLGPILVVIPVFFSYLIVPFGQNILITDLGIGIFFWIALSSIAPIGLLMAGYSSNNKYSLLGGLRAAAQSISYEIPLALAVLAVVMMSNSLSTIDIVNQQSGYGILGWNVIRQPIGFMLFWIAALAECERLPFDLPEAEEELVAGYQTEYAGMKFALFYLGSYVNLVLSSILVAVLYFGGWDLPIPATMIADWINVDPNNAIFELVTAGLGLVMTLLKAYFFLFLAILLRWTVPRVRIDQLLDFGWKFLLPVGLVNLLLTAGLKLAFPFAFGG</sequence>
<gene>
    <name evidence="1" type="primary">ndhA</name>
    <name type="ordered locus">AM1_2158</name>
</gene>
<protein>
    <recommendedName>
        <fullName evidence="1">NAD(P)H-quinone oxidoreductase subunit 1</fullName>
        <ecNumber evidence="1">7.1.1.-</ecNumber>
    </recommendedName>
    <alternativeName>
        <fullName evidence="1">NAD(P)H dehydrogenase I subunit 1</fullName>
    </alternativeName>
    <alternativeName>
        <fullName evidence="1">NDH-1 subunit 1</fullName>
    </alternativeName>
    <alternativeName>
        <fullName evidence="1">NDH-A</fullName>
    </alternativeName>
</protein>
<dbReference type="EC" id="7.1.1.-" evidence="1"/>
<dbReference type="EMBL" id="CP000828">
    <property type="protein sequence ID" value="ABW27172.1"/>
    <property type="molecule type" value="Genomic_DNA"/>
</dbReference>
<dbReference type="SMR" id="B0BZW2"/>
<dbReference type="STRING" id="329726.AM1_2158"/>
<dbReference type="KEGG" id="amr:AM1_2158"/>
<dbReference type="eggNOG" id="COG1005">
    <property type="taxonomic scope" value="Bacteria"/>
</dbReference>
<dbReference type="HOGENOM" id="CLU_015134_0_1_3"/>
<dbReference type="OrthoDB" id="9803734at2"/>
<dbReference type="Proteomes" id="UP000000268">
    <property type="component" value="Chromosome"/>
</dbReference>
<dbReference type="GO" id="GO:0031676">
    <property type="term" value="C:plasma membrane-derived thylakoid membrane"/>
    <property type="evidence" value="ECO:0007669"/>
    <property type="project" value="UniProtKB-SubCell"/>
</dbReference>
<dbReference type="GO" id="GO:0003954">
    <property type="term" value="F:NADH dehydrogenase activity"/>
    <property type="evidence" value="ECO:0007669"/>
    <property type="project" value="TreeGrafter"/>
</dbReference>
<dbReference type="GO" id="GO:0016655">
    <property type="term" value="F:oxidoreductase activity, acting on NAD(P)H, quinone or similar compound as acceptor"/>
    <property type="evidence" value="ECO:0007669"/>
    <property type="project" value="UniProtKB-UniRule"/>
</dbReference>
<dbReference type="GO" id="GO:0048038">
    <property type="term" value="F:quinone binding"/>
    <property type="evidence" value="ECO:0007669"/>
    <property type="project" value="UniProtKB-KW"/>
</dbReference>
<dbReference type="GO" id="GO:0009060">
    <property type="term" value="P:aerobic respiration"/>
    <property type="evidence" value="ECO:0007669"/>
    <property type="project" value="TreeGrafter"/>
</dbReference>
<dbReference type="GO" id="GO:0019684">
    <property type="term" value="P:photosynthesis, light reaction"/>
    <property type="evidence" value="ECO:0007669"/>
    <property type="project" value="UniProtKB-UniRule"/>
</dbReference>
<dbReference type="HAMAP" id="MF_01350">
    <property type="entry name" value="NDH1_NuoH"/>
    <property type="match status" value="1"/>
</dbReference>
<dbReference type="InterPro" id="IPR001694">
    <property type="entry name" value="NADH_UbQ_OxRdtase_su1/FPO"/>
</dbReference>
<dbReference type="InterPro" id="IPR018086">
    <property type="entry name" value="NADH_UbQ_OxRdtase_su1_CS"/>
</dbReference>
<dbReference type="NCBIfam" id="NF004741">
    <property type="entry name" value="PRK06076.1-2"/>
    <property type="match status" value="1"/>
</dbReference>
<dbReference type="NCBIfam" id="NF004744">
    <property type="entry name" value="PRK06076.1-5"/>
    <property type="match status" value="1"/>
</dbReference>
<dbReference type="PANTHER" id="PTHR11432">
    <property type="entry name" value="NADH DEHYDROGENASE SUBUNIT 1"/>
    <property type="match status" value="1"/>
</dbReference>
<dbReference type="PANTHER" id="PTHR11432:SF3">
    <property type="entry name" value="NADH-UBIQUINONE OXIDOREDUCTASE CHAIN 1"/>
    <property type="match status" value="1"/>
</dbReference>
<dbReference type="Pfam" id="PF00146">
    <property type="entry name" value="NADHdh"/>
    <property type="match status" value="1"/>
</dbReference>
<dbReference type="PROSITE" id="PS00667">
    <property type="entry name" value="COMPLEX1_ND1_1"/>
    <property type="match status" value="1"/>
</dbReference>
<dbReference type="PROSITE" id="PS00668">
    <property type="entry name" value="COMPLEX1_ND1_2"/>
    <property type="match status" value="1"/>
</dbReference>
<keyword id="KW-0472">Membrane</keyword>
<keyword id="KW-0520">NAD</keyword>
<keyword id="KW-0521">NADP</keyword>
<keyword id="KW-0618">Plastoquinone</keyword>
<keyword id="KW-0874">Quinone</keyword>
<keyword id="KW-1185">Reference proteome</keyword>
<keyword id="KW-0793">Thylakoid</keyword>
<keyword id="KW-1278">Translocase</keyword>
<keyword id="KW-0812">Transmembrane</keyword>
<keyword id="KW-1133">Transmembrane helix</keyword>
<reference key="1">
    <citation type="journal article" date="2008" name="Proc. Natl. Acad. Sci. U.S.A.">
        <title>Niche adaptation and genome expansion in the chlorophyll d-producing cyanobacterium Acaryochloris marina.</title>
        <authorList>
            <person name="Swingley W.D."/>
            <person name="Chen M."/>
            <person name="Cheung P.C."/>
            <person name="Conrad A.L."/>
            <person name="Dejesa L.C."/>
            <person name="Hao J."/>
            <person name="Honchak B.M."/>
            <person name="Karbach L.E."/>
            <person name="Kurdoglu A."/>
            <person name="Lahiri S."/>
            <person name="Mastrian S.D."/>
            <person name="Miyashita H."/>
            <person name="Page L."/>
            <person name="Ramakrishna P."/>
            <person name="Satoh S."/>
            <person name="Sattley W.M."/>
            <person name="Shimada Y."/>
            <person name="Taylor H.L."/>
            <person name="Tomo T."/>
            <person name="Tsuchiya T."/>
            <person name="Wang Z.T."/>
            <person name="Raymond J."/>
            <person name="Mimuro M."/>
            <person name="Blankenship R.E."/>
            <person name="Touchman J.W."/>
        </authorList>
    </citation>
    <scope>NUCLEOTIDE SEQUENCE [LARGE SCALE GENOMIC DNA]</scope>
    <source>
        <strain>MBIC 11017</strain>
    </source>
</reference>